<dbReference type="EC" id="4.1.1.37" evidence="1"/>
<dbReference type="EMBL" id="CP000577">
    <property type="protein sequence ID" value="ABN77437.1"/>
    <property type="molecule type" value="Genomic_DNA"/>
</dbReference>
<dbReference type="RefSeq" id="WP_011841601.1">
    <property type="nucleotide sequence ID" value="NC_009049.1"/>
</dbReference>
<dbReference type="SMR" id="A3PM71"/>
<dbReference type="KEGG" id="rsh:Rsph17029_2335"/>
<dbReference type="HOGENOM" id="CLU_040933_0_0_5"/>
<dbReference type="UniPathway" id="UPA00251">
    <property type="reaction ID" value="UER00321"/>
</dbReference>
<dbReference type="GO" id="GO:0005829">
    <property type="term" value="C:cytosol"/>
    <property type="evidence" value="ECO:0007669"/>
    <property type="project" value="TreeGrafter"/>
</dbReference>
<dbReference type="GO" id="GO:0004853">
    <property type="term" value="F:uroporphyrinogen decarboxylase activity"/>
    <property type="evidence" value="ECO:0007669"/>
    <property type="project" value="UniProtKB-UniRule"/>
</dbReference>
<dbReference type="GO" id="GO:0019353">
    <property type="term" value="P:protoporphyrinogen IX biosynthetic process from glutamate"/>
    <property type="evidence" value="ECO:0007669"/>
    <property type="project" value="TreeGrafter"/>
</dbReference>
<dbReference type="CDD" id="cd00717">
    <property type="entry name" value="URO-D"/>
    <property type="match status" value="1"/>
</dbReference>
<dbReference type="Gene3D" id="3.20.20.210">
    <property type="match status" value="1"/>
</dbReference>
<dbReference type="HAMAP" id="MF_00218">
    <property type="entry name" value="URO_D"/>
    <property type="match status" value="1"/>
</dbReference>
<dbReference type="InterPro" id="IPR038071">
    <property type="entry name" value="UROD/MetE-like_sf"/>
</dbReference>
<dbReference type="InterPro" id="IPR006361">
    <property type="entry name" value="Uroporphyrinogen_deCO2ase_HemE"/>
</dbReference>
<dbReference type="InterPro" id="IPR000257">
    <property type="entry name" value="Uroporphyrinogen_deCOase"/>
</dbReference>
<dbReference type="NCBIfam" id="TIGR01464">
    <property type="entry name" value="hemE"/>
    <property type="match status" value="1"/>
</dbReference>
<dbReference type="PANTHER" id="PTHR21091">
    <property type="entry name" value="METHYLTETRAHYDROFOLATE:HOMOCYSTEINE METHYLTRANSFERASE RELATED"/>
    <property type="match status" value="1"/>
</dbReference>
<dbReference type="PANTHER" id="PTHR21091:SF169">
    <property type="entry name" value="UROPORPHYRINOGEN DECARBOXYLASE"/>
    <property type="match status" value="1"/>
</dbReference>
<dbReference type="Pfam" id="PF01208">
    <property type="entry name" value="URO-D"/>
    <property type="match status" value="1"/>
</dbReference>
<dbReference type="SUPFAM" id="SSF51726">
    <property type="entry name" value="UROD/MetE-like"/>
    <property type="match status" value="1"/>
</dbReference>
<dbReference type="PROSITE" id="PS00906">
    <property type="entry name" value="UROD_1"/>
    <property type="match status" value="1"/>
</dbReference>
<dbReference type="PROSITE" id="PS00907">
    <property type="entry name" value="UROD_2"/>
    <property type="match status" value="1"/>
</dbReference>
<comment type="function">
    <text evidence="1">Catalyzes the decarboxylation of four acetate groups of uroporphyrinogen-III to yield coproporphyrinogen-III.</text>
</comment>
<comment type="catalytic activity">
    <reaction evidence="1">
        <text>uroporphyrinogen III + 4 H(+) = coproporphyrinogen III + 4 CO2</text>
        <dbReference type="Rhea" id="RHEA:19865"/>
        <dbReference type="ChEBI" id="CHEBI:15378"/>
        <dbReference type="ChEBI" id="CHEBI:16526"/>
        <dbReference type="ChEBI" id="CHEBI:57308"/>
        <dbReference type="ChEBI" id="CHEBI:57309"/>
        <dbReference type="EC" id="4.1.1.37"/>
    </reaction>
</comment>
<comment type="pathway">
    <text evidence="1">Porphyrin-containing compound metabolism; protoporphyrin-IX biosynthesis; coproporphyrinogen-III from 5-aminolevulinate: step 4/4.</text>
</comment>
<comment type="subunit">
    <text evidence="1">Homodimer.</text>
</comment>
<comment type="subcellular location">
    <subcellularLocation>
        <location evidence="1">Cytoplasm</location>
    </subcellularLocation>
</comment>
<comment type="similarity">
    <text evidence="1">Belongs to the uroporphyrinogen decarboxylase family.</text>
</comment>
<accession>A3PM71</accession>
<protein>
    <recommendedName>
        <fullName evidence="1">Uroporphyrinogen decarboxylase</fullName>
        <shortName evidence="1">UPD</shortName>
        <shortName evidence="1">URO-D</shortName>
        <ecNumber evidence="1">4.1.1.37</ecNumber>
    </recommendedName>
</protein>
<reference key="1">
    <citation type="submission" date="2007-02" db="EMBL/GenBank/DDBJ databases">
        <title>Complete sequence of chromosome 1 of Rhodobacter sphaeroides ATCC 17029.</title>
        <authorList>
            <person name="Copeland A."/>
            <person name="Lucas S."/>
            <person name="Lapidus A."/>
            <person name="Barry K."/>
            <person name="Detter J.C."/>
            <person name="Glavina del Rio T."/>
            <person name="Hammon N."/>
            <person name="Israni S."/>
            <person name="Dalin E."/>
            <person name="Tice H."/>
            <person name="Pitluck S."/>
            <person name="Kiss H."/>
            <person name="Brettin T."/>
            <person name="Bruce D."/>
            <person name="Han C."/>
            <person name="Tapia R."/>
            <person name="Gilna P."/>
            <person name="Schmutz J."/>
            <person name="Larimer F."/>
            <person name="Land M."/>
            <person name="Hauser L."/>
            <person name="Kyrpides N."/>
            <person name="Mikhailova N."/>
            <person name="Richardson P."/>
            <person name="Mackenzie C."/>
            <person name="Choudhary M."/>
            <person name="Donohue T.J."/>
            <person name="Kaplan S."/>
        </authorList>
    </citation>
    <scope>NUCLEOTIDE SEQUENCE [LARGE SCALE GENOMIC DNA]</scope>
    <source>
        <strain>ATCC 17029 / ATH 2.4.9</strain>
    </source>
</reference>
<keyword id="KW-0963">Cytoplasm</keyword>
<keyword id="KW-0210">Decarboxylase</keyword>
<keyword id="KW-0456">Lyase</keyword>
<keyword id="KW-0627">Porphyrin biosynthesis</keyword>
<feature type="chain" id="PRO_1000023957" description="Uroporphyrinogen decarboxylase">
    <location>
        <begin position="1"/>
        <end position="343"/>
    </location>
</feature>
<feature type="binding site" evidence="1">
    <location>
        <begin position="23"/>
        <end position="27"/>
    </location>
    <ligand>
        <name>substrate</name>
    </ligand>
</feature>
<feature type="binding site" evidence="1">
    <location>
        <position position="73"/>
    </location>
    <ligand>
        <name>substrate</name>
    </ligand>
</feature>
<feature type="binding site" evidence="1">
    <location>
        <position position="150"/>
    </location>
    <ligand>
        <name>substrate</name>
    </ligand>
</feature>
<feature type="binding site" evidence="1">
    <location>
        <position position="205"/>
    </location>
    <ligand>
        <name>substrate</name>
    </ligand>
</feature>
<feature type="binding site" evidence="1">
    <location>
        <position position="322"/>
    </location>
    <ligand>
        <name>substrate</name>
    </ligand>
</feature>
<feature type="site" description="Transition state stabilizer" evidence="1">
    <location>
        <position position="73"/>
    </location>
</feature>
<sequence length="343" mass="37602">MTKTMLRALKGETLPTPPIWLMRQAGRYLPEYRATRAQAGDFLSLCYTPDLAAEVTLQPIRRYGFDAAILFADILLLPQALGADLWFETGEGPRMSTITDMEGVTALKGRDDIHETLAPVYETCRILARELPKETTFIGFAGMPWTVATYMIAGRGSKDQAAAHKLKDTDRPAFEALMDRVTEATIEYLAKQVEAGCEVVKLFDSWAGSLKGQDFEDFAVAPAKRIVSELKARFPGLPVIAFPREAGEGYIGFAEKTGADCVAIDNSVSPEWAAEKVQAGRTCVQGNLDPKYMVTGGEELVQATKRVVEAFRNGPHIFNLGHGITPEADPENVTLLVETIRGK</sequence>
<proteinExistence type="inferred from homology"/>
<gene>
    <name evidence="1" type="primary">hemE</name>
    <name type="ordered locus">Rsph17029_2335</name>
</gene>
<organism>
    <name type="scientific">Cereibacter sphaeroides (strain ATCC 17029 / ATH 2.4.9)</name>
    <name type="common">Rhodobacter sphaeroides</name>
    <dbReference type="NCBI Taxonomy" id="349101"/>
    <lineage>
        <taxon>Bacteria</taxon>
        <taxon>Pseudomonadati</taxon>
        <taxon>Pseudomonadota</taxon>
        <taxon>Alphaproteobacteria</taxon>
        <taxon>Rhodobacterales</taxon>
        <taxon>Paracoccaceae</taxon>
        <taxon>Cereibacter</taxon>
    </lineage>
</organism>
<name>DCUP_CERS1</name>
<evidence type="ECO:0000255" key="1">
    <source>
        <dbReference type="HAMAP-Rule" id="MF_00218"/>
    </source>
</evidence>